<protein>
    <recommendedName>
        <fullName>Translocator protein BipB</fullName>
    </recommendedName>
</protein>
<dbReference type="EMBL" id="CP000125">
    <property type="protein sequence ID" value="ABA52751.1"/>
    <property type="molecule type" value="Genomic_DNA"/>
</dbReference>
<dbReference type="RefSeq" id="WP_004528817.1">
    <property type="nucleotide sequence ID" value="NC_007435.1"/>
</dbReference>
<dbReference type="SMR" id="Q3JL23"/>
<dbReference type="TCDB" id="1.C.36.3.3">
    <property type="family name" value="the bacterial type iii-target cell pore (iiitcp) family"/>
</dbReference>
<dbReference type="EnsemblBacteria" id="ABA52751">
    <property type="protein sequence ID" value="ABA52751"/>
    <property type="gene ID" value="BURPS1710b_A0571"/>
</dbReference>
<dbReference type="KEGG" id="bpm:BURPS1710b_A0571"/>
<dbReference type="HOGENOM" id="CLU_027418_0_0_4"/>
<dbReference type="Proteomes" id="UP000002700">
    <property type="component" value="Chromosome II"/>
</dbReference>
<dbReference type="GO" id="GO:0005576">
    <property type="term" value="C:extracellular region"/>
    <property type="evidence" value="ECO:0007669"/>
    <property type="project" value="UniProtKB-SubCell"/>
</dbReference>
<dbReference type="GO" id="GO:0033644">
    <property type="term" value="C:host cell membrane"/>
    <property type="evidence" value="ECO:0007669"/>
    <property type="project" value="UniProtKB-SubCell"/>
</dbReference>
<dbReference type="GO" id="GO:0016020">
    <property type="term" value="C:membrane"/>
    <property type="evidence" value="ECO:0007669"/>
    <property type="project" value="UniProtKB-KW"/>
</dbReference>
<dbReference type="GO" id="GO:0141160">
    <property type="term" value="P:symbiont-mediated disruption of host phagosome"/>
    <property type="evidence" value="ECO:0000269"/>
    <property type="project" value="SigSci"/>
</dbReference>
<dbReference type="Gene3D" id="1.20.120.330">
    <property type="entry name" value="Nucleotidyltransferases domain 2"/>
    <property type="match status" value="2"/>
</dbReference>
<dbReference type="InterPro" id="IPR006972">
    <property type="entry name" value="BipB-like_C"/>
</dbReference>
<dbReference type="InterPro" id="IPR032391">
    <property type="entry name" value="IpaB/BipB/SctE_N"/>
</dbReference>
<dbReference type="InterPro" id="IPR003895">
    <property type="entry name" value="T3SS_SctE/BipB"/>
</dbReference>
<dbReference type="Pfam" id="PF04888">
    <property type="entry name" value="SseC"/>
    <property type="match status" value="1"/>
</dbReference>
<dbReference type="Pfam" id="PF16535">
    <property type="entry name" value="T3SSipB"/>
    <property type="match status" value="1"/>
</dbReference>
<dbReference type="PRINTS" id="PR01375">
    <property type="entry name" value="BACINVASINB"/>
</dbReference>
<keyword id="KW-0175">Coiled coil</keyword>
<keyword id="KW-1043">Host membrane</keyword>
<keyword id="KW-0472">Membrane</keyword>
<keyword id="KW-0964">Secreted</keyword>
<keyword id="KW-0812">Transmembrane</keyword>
<keyword id="KW-1133">Transmembrane helix</keyword>
<keyword id="KW-0843">Virulence</keyword>
<comment type="function">
    <text evidence="1">Plays a role in the bacterium-induced formation of multinucleated giant cell (MNGC), which is formed after host cell fusion, as well as in the intercellular spreading of bacteria and in the induction of apoptosis in macrophages. May act in concert with other effector proteins to induce fusion of host cell membranes (By similarity).</text>
</comment>
<comment type="subcellular location">
    <subcellularLocation>
        <location evidence="1">Secreted</location>
    </subcellularLocation>
    <subcellularLocation>
        <location evidence="1">Host membrane</location>
    </subcellularLocation>
    <text evidence="1">Secreted via the bsa type III secretion system, and probably inserted into host membranes.</text>
</comment>
<comment type="similarity">
    <text evidence="4">Belongs to the SctE/SipB/YopB family.</text>
</comment>
<name>BIPB_BURP1</name>
<accession>Q3JL23</accession>
<gene>
    <name type="primary">bipB</name>
    <name type="ordered locus">BURPS1710b_A0571</name>
</gene>
<sequence length="620" mass="64647">MSSGVQGGPAAHANAYQTHPLRDAASALGTLSPQAYVDVVSAAQRNFLERMSQLASEQCDAQPAAHDARLDDKPALRAPQERDAPPLGASDTGSRASGAAKLTELLGVLMSVISASSLDELKQRSDIWNQMSKAAQDNLSRLSDAFQRATDEAKAAADAAEQAAAAAKQAGADAKAADAAVDAAQKQYDDAVKQGLPDDRLQSLKAALEQARQQAGDAHGRADALQADATKKLDAASALATQARACEQQVDDAVNQATQQYGASASLRTPQSPRLSGAAELTAVLGKLQELISSGNVKELESKQKLFTEMQAKREAELQKKSDEYQAQVKKAEEMQKTMGCIGKIVGWVITAVSFAAAAFTGGASLALAAVGLALAVGDEISRATTGVSFMDKLMQPVMDAILKPLMEMISSLITKALVACGVDQQKAELAGAILGAVVTGVALVAAAFVGASAVKAVASKVIDAMAGQLTKLMDSAIGKMLVQLIEKFSEKSGLQALGSRTATAMTRMRRAIGVEAKEDGMLLANRFEKAGTVMNVGNQVSQAAGGIVVGVERAKAMGLLADVKEAMYDIKLLGDLLKQAVDAFAEHNRVLAQLMQQMSDAGEMQTSTGKLILRNARAV</sequence>
<feature type="chain" id="PRO_0000343991" description="Translocator protein BipB">
    <location>
        <begin position="1"/>
        <end position="620"/>
    </location>
</feature>
<feature type="transmembrane region" description="Helical" evidence="2">
    <location>
        <begin position="355"/>
        <end position="375"/>
    </location>
</feature>
<feature type="transmembrane region" description="Helical" evidence="2">
    <location>
        <begin position="401"/>
        <end position="421"/>
    </location>
</feature>
<feature type="transmembrane region" description="Helical" evidence="2">
    <location>
        <begin position="430"/>
        <end position="450"/>
    </location>
</feature>
<feature type="region of interest" description="Disordered" evidence="3">
    <location>
        <begin position="58"/>
        <end position="95"/>
    </location>
</feature>
<feature type="coiled-coil region" evidence="2">
    <location>
        <begin position="309"/>
        <end position="339"/>
    </location>
</feature>
<feature type="compositionally biased region" description="Basic and acidic residues" evidence="3">
    <location>
        <begin position="66"/>
        <end position="84"/>
    </location>
</feature>
<proteinExistence type="inferred from homology"/>
<reference key="1">
    <citation type="journal article" date="2010" name="Genome Biol. Evol.">
        <title>Continuing evolution of Burkholderia mallei through genome reduction and large-scale rearrangements.</title>
        <authorList>
            <person name="Losada L."/>
            <person name="Ronning C.M."/>
            <person name="DeShazer D."/>
            <person name="Woods D."/>
            <person name="Fedorova N."/>
            <person name="Kim H.S."/>
            <person name="Shabalina S.A."/>
            <person name="Pearson T.R."/>
            <person name="Brinkac L."/>
            <person name="Tan P."/>
            <person name="Nandi T."/>
            <person name="Crabtree J."/>
            <person name="Badger J."/>
            <person name="Beckstrom-Sternberg S."/>
            <person name="Saqib M."/>
            <person name="Schutzer S.E."/>
            <person name="Keim P."/>
            <person name="Nierman W.C."/>
        </authorList>
    </citation>
    <scope>NUCLEOTIDE SEQUENCE [LARGE SCALE GENOMIC DNA]</scope>
    <source>
        <strain>1710b</strain>
    </source>
</reference>
<evidence type="ECO:0000250" key="1"/>
<evidence type="ECO:0000255" key="2"/>
<evidence type="ECO:0000256" key="3">
    <source>
        <dbReference type="SAM" id="MobiDB-lite"/>
    </source>
</evidence>
<evidence type="ECO:0000305" key="4"/>
<organism>
    <name type="scientific">Burkholderia pseudomallei (strain 1710b)</name>
    <dbReference type="NCBI Taxonomy" id="320372"/>
    <lineage>
        <taxon>Bacteria</taxon>
        <taxon>Pseudomonadati</taxon>
        <taxon>Pseudomonadota</taxon>
        <taxon>Betaproteobacteria</taxon>
        <taxon>Burkholderiales</taxon>
        <taxon>Burkholderiaceae</taxon>
        <taxon>Burkholderia</taxon>
        <taxon>pseudomallei group</taxon>
    </lineage>
</organism>